<protein>
    <recommendedName>
        <fullName evidence="1">4-hydroxy-2-oxo-heptane-1,7-dioate aldolase</fullName>
        <ecNumber evidence="1">4.1.2.52</ecNumber>
    </recommendedName>
    <alternativeName>
        <fullName evidence="1">2,4-dihydroxyhept-2-ene-1,7-dioic acid aldolase</fullName>
        <shortName evidence="1">HHED aldolase</shortName>
    </alternativeName>
    <alternativeName>
        <fullName evidence="1">4-hydroxy-2-ketoheptane-1,7-dioate aldolase</fullName>
        <shortName evidence="1">HKHD aldolase</shortName>
    </alternativeName>
</protein>
<accession>Q31SY8</accession>
<comment type="function">
    <text evidence="1">Catalyzes the reversible retro-aldol cleavage of 4-hydroxy-2-ketoheptane-1,7-dioate (HKHD) to pyruvate and succinic semialdehyde.</text>
</comment>
<comment type="catalytic activity">
    <reaction evidence="1">
        <text>4-hydroxy-2-oxoheptanedioate = succinate semialdehyde + pyruvate</text>
        <dbReference type="Rhea" id="RHEA:25788"/>
        <dbReference type="ChEBI" id="CHEBI:15361"/>
        <dbReference type="ChEBI" id="CHEBI:57706"/>
        <dbReference type="ChEBI" id="CHEBI:73036"/>
        <dbReference type="EC" id="4.1.2.52"/>
    </reaction>
</comment>
<comment type="cofactor">
    <cofactor evidence="1">
        <name>a divalent metal cation</name>
        <dbReference type="ChEBI" id="CHEBI:60240"/>
    </cofactor>
    <text evidence="1">Binds 1 divalent metal cation per subunit.</text>
</comment>
<comment type="pathway">
    <text evidence="1">Aromatic compound metabolism; 4-hydroxyphenylacetate degradation; pyruvate and succinate semialdehyde from 4-hydroxyphenylacetate: step 7/7.</text>
</comment>
<comment type="subunit">
    <text evidence="1">Homohexamer; trimer of dimers.</text>
</comment>
<comment type="similarity">
    <text evidence="1">Belongs to the HpcH/HpaI aldolase family.</text>
</comment>
<organism>
    <name type="scientific">Shigella boydii serotype 4 (strain Sb227)</name>
    <dbReference type="NCBI Taxonomy" id="300268"/>
    <lineage>
        <taxon>Bacteria</taxon>
        <taxon>Pseudomonadati</taxon>
        <taxon>Pseudomonadota</taxon>
        <taxon>Gammaproteobacteria</taxon>
        <taxon>Enterobacterales</taxon>
        <taxon>Enterobacteriaceae</taxon>
        <taxon>Shigella</taxon>
    </lineage>
</organism>
<dbReference type="EC" id="4.1.2.52" evidence="1"/>
<dbReference type="EMBL" id="CP000036">
    <property type="protein sequence ID" value="ABB68820.1"/>
    <property type="molecule type" value="Genomic_DNA"/>
</dbReference>
<dbReference type="RefSeq" id="WP_000431714.1">
    <property type="nucleotide sequence ID" value="NC_007613.1"/>
</dbReference>
<dbReference type="SMR" id="Q31SY8"/>
<dbReference type="KEGG" id="sbo:SBO_4407"/>
<dbReference type="HOGENOM" id="CLU_059964_1_0_6"/>
<dbReference type="UniPathway" id="UPA00208">
    <property type="reaction ID" value="UER00422"/>
</dbReference>
<dbReference type="Proteomes" id="UP000007067">
    <property type="component" value="Chromosome"/>
</dbReference>
<dbReference type="GO" id="GO:0005737">
    <property type="term" value="C:cytoplasm"/>
    <property type="evidence" value="ECO:0007669"/>
    <property type="project" value="TreeGrafter"/>
</dbReference>
<dbReference type="GO" id="GO:0043863">
    <property type="term" value="F:4-hydroxy-2-ketopimelate aldolase activity"/>
    <property type="evidence" value="ECO:0007669"/>
    <property type="project" value="RHEA"/>
</dbReference>
<dbReference type="GO" id="GO:0046872">
    <property type="term" value="F:metal ion binding"/>
    <property type="evidence" value="ECO:0007669"/>
    <property type="project" value="UniProtKB-UniRule"/>
</dbReference>
<dbReference type="GO" id="GO:1901023">
    <property type="term" value="P:4-hydroxyphenylacetate catabolic process"/>
    <property type="evidence" value="ECO:0007669"/>
    <property type="project" value="UniProtKB-UniRule"/>
</dbReference>
<dbReference type="GO" id="GO:0010124">
    <property type="term" value="P:phenylacetate catabolic process"/>
    <property type="evidence" value="ECO:0007669"/>
    <property type="project" value="InterPro"/>
</dbReference>
<dbReference type="FunFam" id="3.20.20.60:FF:000004">
    <property type="entry name" value="5-keto-4-deoxy-D-glucarate aldolase"/>
    <property type="match status" value="1"/>
</dbReference>
<dbReference type="Gene3D" id="3.20.20.60">
    <property type="entry name" value="Phosphoenolpyruvate-binding domains"/>
    <property type="match status" value="1"/>
</dbReference>
<dbReference type="HAMAP" id="MF_01292">
    <property type="entry name" value="HKHD_aldolase"/>
    <property type="match status" value="1"/>
</dbReference>
<dbReference type="InterPro" id="IPR005000">
    <property type="entry name" value="Aldolase/citrate-lyase_domain"/>
</dbReference>
<dbReference type="InterPro" id="IPR023701">
    <property type="entry name" value="HKHD_aldolase_ent"/>
</dbReference>
<dbReference type="InterPro" id="IPR012689">
    <property type="entry name" value="HpaI"/>
</dbReference>
<dbReference type="InterPro" id="IPR050251">
    <property type="entry name" value="HpcH-HpaI_aldolase"/>
</dbReference>
<dbReference type="InterPro" id="IPR015813">
    <property type="entry name" value="Pyrv/PenolPyrv_kinase-like_dom"/>
</dbReference>
<dbReference type="InterPro" id="IPR040442">
    <property type="entry name" value="Pyrv_kinase-like_dom_sf"/>
</dbReference>
<dbReference type="NCBIfam" id="TIGR02311">
    <property type="entry name" value="HpaI"/>
    <property type="match status" value="1"/>
</dbReference>
<dbReference type="PANTHER" id="PTHR30502">
    <property type="entry name" value="2-KETO-3-DEOXY-L-RHAMNONATE ALDOLASE"/>
    <property type="match status" value="1"/>
</dbReference>
<dbReference type="PANTHER" id="PTHR30502:SF0">
    <property type="entry name" value="PHOSPHOENOLPYRUVATE CARBOXYLASE FAMILY PROTEIN"/>
    <property type="match status" value="1"/>
</dbReference>
<dbReference type="Pfam" id="PF03328">
    <property type="entry name" value="HpcH_HpaI"/>
    <property type="match status" value="1"/>
</dbReference>
<dbReference type="SUPFAM" id="SSF51621">
    <property type="entry name" value="Phosphoenolpyruvate/pyruvate domain"/>
    <property type="match status" value="1"/>
</dbReference>
<proteinExistence type="inferred from homology"/>
<keyword id="KW-0058">Aromatic hydrocarbons catabolism</keyword>
<keyword id="KW-0456">Lyase</keyword>
<keyword id="KW-0479">Metal-binding</keyword>
<feature type="chain" id="PRO_0000355113" description="4-hydroxy-2-oxo-heptane-1,7-dioate aldolase">
    <location>
        <begin position="1"/>
        <end position="262"/>
    </location>
</feature>
<feature type="active site" description="Proton acceptor" evidence="1">
    <location>
        <position position="45"/>
    </location>
</feature>
<feature type="binding site" evidence="1">
    <location>
        <position position="147"/>
    </location>
    <ligand>
        <name>substrate</name>
    </ligand>
</feature>
<feature type="binding site" evidence="1">
    <location>
        <position position="149"/>
    </location>
    <ligand>
        <name>a divalent metal cation</name>
        <dbReference type="ChEBI" id="CHEBI:60240"/>
    </ligand>
</feature>
<feature type="binding site" evidence="1">
    <location>
        <position position="174"/>
    </location>
    <ligand>
        <name>substrate</name>
    </ligand>
</feature>
<feature type="binding site" evidence="1">
    <location>
        <position position="175"/>
    </location>
    <ligand>
        <name>a divalent metal cation</name>
        <dbReference type="ChEBI" id="CHEBI:60240"/>
    </ligand>
</feature>
<feature type="binding site" evidence="1">
    <location>
        <position position="175"/>
    </location>
    <ligand>
        <name>substrate</name>
    </ligand>
</feature>
<feature type="site" description="Transition state stabilizer" evidence="1">
    <location>
        <position position="70"/>
    </location>
</feature>
<feature type="site" description="Increases basicity of active site His" evidence="1">
    <location>
        <position position="84"/>
    </location>
</feature>
<reference key="1">
    <citation type="journal article" date="2005" name="Nucleic Acids Res.">
        <title>Genome dynamics and diversity of Shigella species, the etiologic agents of bacillary dysentery.</title>
        <authorList>
            <person name="Yang F."/>
            <person name="Yang J."/>
            <person name="Zhang X."/>
            <person name="Chen L."/>
            <person name="Jiang Y."/>
            <person name="Yan Y."/>
            <person name="Tang X."/>
            <person name="Wang J."/>
            <person name="Xiong Z."/>
            <person name="Dong J."/>
            <person name="Xue Y."/>
            <person name="Zhu Y."/>
            <person name="Xu X."/>
            <person name="Sun L."/>
            <person name="Chen S."/>
            <person name="Nie H."/>
            <person name="Peng J."/>
            <person name="Xu J."/>
            <person name="Wang Y."/>
            <person name="Yuan Z."/>
            <person name="Wen Y."/>
            <person name="Yao Z."/>
            <person name="Shen Y."/>
            <person name="Qiang B."/>
            <person name="Hou Y."/>
            <person name="Yu J."/>
            <person name="Jin Q."/>
        </authorList>
    </citation>
    <scope>NUCLEOTIDE SEQUENCE [LARGE SCALE GENOMIC DNA]</scope>
    <source>
        <strain>Sb227</strain>
    </source>
</reference>
<sequence>MENSFKAALKAGRPQIGLWLGLSSSYSAELLAGAGFDWLLSDGEHAPNNVQTVLTQLQAIAPYPSQPVVRPSWNDPVQIKQLLDVGTQTLLVPMVQNADEAREAVRATRYPPAGIRGVGSALARASRWNRIPDYLQKANDQMCVLVQIETREAMKNLPQILDVEGVDGVFIGPADLSADMGYAGNPQHPEVQAAIEQAIVQIRESGKAPGILIANEQLAKRYLELGALFVAVGVDTTLLARAAEALAARFGAQATAVKPGVY</sequence>
<name>HPCH_SHIBS</name>
<gene>
    <name evidence="1" type="primary">hpcH</name>
    <name evidence="1" type="synonym">hpaI</name>
    <name type="ordered locus">SBO_4407</name>
</gene>
<evidence type="ECO:0000255" key="1">
    <source>
        <dbReference type="HAMAP-Rule" id="MF_01292"/>
    </source>
</evidence>